<comment type="function">
    <text evidence="1">Catalyzes the reversible phosphorylation of UMP to UDP.</text>
</comment>
<comment type="catalytic activity">
    <reaction evidence="1">
        <text>UMP + ATP = UDP + ADP</text>
        <dbReference type="Rhea" id="RHEA:24400"/>
        <dbReference type="ChEBI" id="CHEBI:30616"/>
        <dbReference type="ChEBI" id="CHEBI:57865"/>
        <dbReference type="ChEBI" id="CHEBI:58223"/>
        <dbReference type="ChEBI" id="CHEBI:456216"/>
        <dbReference type="EC" id="2.7.4.22"/>
    </reaction>
</comment>
<comment type="activity regulation">
    <text evidence="1">Allosterically activated by GTP. Inhibited by UTP.</text>
</comment>
<comment type="pathway">
    <text evidence="1">Pyrimidine metabolism; CTP biosynthesis via de novo pathway; UDP from UMP (UMPK route): step 1/1.</text>
</comment>
<comment type="subunit">
    <text evidence="1">Homohexamer.</text>
</comment>
<comment type="subcellular location">
    <subcellularLocation>
        <location evidence="1">Cytoplasm</location>
    </subcellularLocation>
</comment>
<comment type="similarity">
    <text evidence="1">Belongs to the UMP kinase family.</text>
</comment>
<keyword id="KW-0021">Allosteric enzyme</keyword>
<keyword id="KW-0067">ATP-binding</keyword>
<keyword id="KW-0963">Cytoplasm</keyword>
<keyword id="KW-0418">Kinase</keyword>
<keyword id="KW-0547">Nucleotide-binding</keyword>
<keyword id="KW-0665">Pyrimidine biosynthesis</keyword>
<keyword id="KW-0808">Transferase</keyword>
<evidence type="ECO:0000255" key="1">
    <source>
        <dbReference type="HAMAP-Rule" id="MF_01220"/>
    </source>
</evidence>
<proteinExistence type="inferred from homology"/>
<name>PYRH_YERP3</name>
<protein>
    <recommendedName>
        <fullName evidence="1">Uridylate kinase</fullName>
        <shortName evidence="1">UK</shortName>
        <ecNumber evidence="1">2.7.4.22</ecNumber>
    </recommendedName>
    <alternativeName>
        <fullName evidence="1">Uridine monophosphate kinase</fullName>
        <shortName evidence="1">UMP kinase</shortName>
        <shortName evidence="1">UMPK</shortName>
    </alternativeName>
</protein>
<gene>
    <name evidence="1" type="primary">pyrH</name>
    <name type="ordered locus">YpsIP31758_1015</name>
</gene>
<reference key="1">
    <citation type="journal article" date="2007" name="PLoS Genet.">
        <title>The complete genome sequence of Yersinia pseudotuberculosis IP31758, the causative agent of Far East scarlet-like fever.</title>
        <authorList>
            <person name="Eppinger M."/>
            <person name="Rosovitz M.J."/>
            <person name="Fricke W.F."/>
            <person name="Rasko D.A."/>
            <person name="Kokorina G."/>
            <person name="Fayolle C."/>
            <person name="Lindler L.E."/>
            <person name="Carniel E."/>
            <person name="Ravel J."/>
        </authorList>
    </citation>
    <scope>NUCLEOTIDE SEQUENCE [LARGE SCALE GENOMIC DNA]</scope>
    <source>
        <strain>IP 31758</strain>
    </source>
</reference>
<sequence>MATNAKPVYQRILLKLSGEALQGAEGFGIDASVLDRMAQEVKELVELGIQVGVVIGGGNLFRGAGLAQAGMNRVVGDHMGMLATVMNGLAMRDALHRAYVNARLMSAIPLNGVCDNYSWAEAISLLRHNRVVIFAAGTGNPFFTTDSAACLRGIEIEADVVLKATKVDGVYSADPVKNPDATLYEQLTYQDVLEQELKVMDLAAFTLARDHNLPIRVFNMNKPGALRRVVMGENEGTLIAK</sequence>
<dbReference type="EC" id="2.7.4.22" evidence="1"/>
<dbReference type="EMBL" id="CP000720">
    <property type="protein sequence ID" value="ABS47231.1"/>
    <property type="molecule type" value="Genomic_DNA"/>
</dbReference>
<dbReference type="RefSeq" id="WP_002212133.1">
    <property type="nucleotide sequence ID" value="NC_009708.1"/>
</dbReference>
<dbReference type="SMR" id="A7FFH1"/>
<dbReference type="GeneID" id="96662368"/>
<dbReference type="KEGG" id="ypi:YpsIP31758_1015"/>
<dbReference type="HOGENOM" id="CLU_033861_0_0_6"/>
<dbReference type="UniPathway" id="UPA00159">
    <property type="reaction ID" value="UER00275"/>
</dbReference>
<dbReference type="Proteomes" id="UP000002412">
    <property type="component" value="Chromosome"/>
</dbReference>
<dbReference type="GO" id="GO:0005829">
    <property type="term" value="C:cytosol"/>
    <property type="evidence" value="ECO:0007669"/>
    <property type="project" value="TreeGrafter"/>
</dbReference>
<dbReference type="GO" id="GO:0005524">
    <property type="term" value="F:ATP binding"/>
    <property type="evidence" value="ECO:0007669"/>
    <property type="project" value="UniProtKB-KW"/>
</dbReference>
<dbReference type="GO" id="GO:0033862">
    <property type="term" value="F:UMP kinase activity"/>
    <property type="evidence" value="ECO:0007669"/>
    <property type="project" value="UniProtKB-EC"/>
</dbReference>
<dbReference type="GO" id="GO:0044210">
    <property type="term" value="P:'de novo' CTP biosynthetic process"/>
    <property type="evidence" value="ECO:0007669"/>
    <property type="project" value="UniProtKB-UniRule"/>
</dbReference>
<dbReference type="GO" id="GO:0006225">
    <property type="term" value="P:UDP biosynthetic process"/>
    <property type="evidence" value="ECO:0007669"/>
    <property type="project" value="TreeGrafter"/>
</dbReference>
<dbReference type="CDD" id="cd04254">
    <property type="entry name" value="AAK_UMPK-PyrH-Ec"/>
    <property type="match status" value="1"/>
</dbReference>
<dbReference type="FunFam" id="3.40.1160.10:FF:000001">
    <property type="entry name" value="Uridylate kinase"/>
    <property type="match status" value="1"/>
</dbReference>
<dbReference type="Gene3D" id="3.40.1160.10">
    <property type="entry name" value="Acetylglutamate kinase-like"/>
    <property type="match status" value="1"/>
</dbReference>
<dbReference type="HAMAP" id="MF_01220_B">
    <property type="entry name" value="PyrH_B"/>
    <property type="match status" value="1"/>
</dbReference>
<dbReference type="InterPro" id="IPR036393">
    <property type="entry name" value="AceGlu_kinase-like_sf"/>
</dbReference>
<dbReference type="InterPro" id="IPR001048">
    <property type="entry name" value="Asp/Glu/Uridylate_kinase"/>
</dbReference>
<dbReference type="InterPro" id="IPR011817">
    <property type="entry name" value="Uridylate_kinase"/>
</dbReference>
<dbReference type="InterPro" id="IPR015963">
    <property type="entry name" value="Uridylate_kinase_bac"/>
</dbReference>
<dbReference type="NCBIfam" id="TIGR02075">
    <property type="entry name" value="pyrH_bact"/>
    <property type="match status" value="1"/>
</dbReference>
<dbReference type="PANTHER" id="PTHR42833">
    <property type="entry name" value="URIDYLATE KINASE"/>
    <property type="match status" value="1"/>
</dbReference>
<dbReference type="PANTHER" id="PTHR42833:SF4">
    <property type="entry name" value="URIDYLATE KINASE PUMPKIN, CHLOROPLASTIC"/>
    <property type="match status" value="1"/>
</dbReference>
<dbReference type="Pfam" id="PF00696">
    <property type="entry name" value="AA_kinase"/>
    <property type="match status" value="1"/>
</dbReference>
<dbReference type="PIRSF" id="PIRSF005650">
    <property type="entry name" value="Uridylate_kin"/>
    <property type="match status" value="1"/>
</dbReference>
<dbReference type="SUPFAM" id="SSF53633">
    <property type="entry name" value="Carbamate kinase-like"/>
    <property type="match status" value="1"/>
</dbReference>
<organism>
    <name type="scientific">Yersinia pseudotuberculosis serotype O:1b (strain IP 31758)</name>
    <dbReference type="NCBI Taxonomy" id="349747"/>
    <lineage>
        <taxon>Bacteria</taxon>
        <taxon>Pseudomonadati</taxon>
        <taxon>Pseudomonadota</taxon>
        <taxon>Gammaproteobacteria</taxon>
        <taxon>Enterobacterales</taxon>
        <taxon>Yersiniaceae</taxon>
        <taxon>Yersinia</taxon>
    </lineage>
</organism>
<accession>A7FFH1</accession>
<feature type="chain" id="PRO_1000066744" description="Uridylate kinase">
    <location>
        <begin position="1"/>
        <end position="241"/>
    </location>
</feature>
<feature type="region of interest" description="Involved in allosteric activation by GTP" evidence="1">
    <location>
        <begin position="23"/>
        <end position="28"/>
    </location>
</feature>
<feature type="binding site" evidence="1">
    <location>
        <begin position="15"/>
        <end position="18"/>
    </location>
    <ligand>
        <name>ATP</name>
        <dbReference type="ChEBI" id="CHEBI:30616"/>
    </ligand>
</feature>
<feature type="binding site" evidence="1">
    <location>
        <position position="57"/>
    </location>
    <ligand>
        <name>UMP</name>
        <dbReference type="ChEBI" id="CHEBI:57865"/>
    </ligand>
</feature>
<feature type="binding site" evidence="1">
    <location>
        <position position="58"/>
    </location>
    <ligand>
        <name>ATP</name>
        <dbReference type="ChEBI" id="CHEBI:30616"/>
    </ligand>
</feature>
<feature type="binding site" evidence="1">
    <location>
        <position position="62"/>
    </location>
    <ligand>
        <name>ATP</name>
        <dbReference type="ChEBI" id="CHEBI:30616"/>
    </ligand>
</feature>
<feature type="binding site" evidence="1">
    <location>
        <position position="77"/>
    </location>
    <ligand>
        <name>UMP</name>
        <dbReference type="ChEBI" id="CHEBI:57865"/>
    </ligand>
</feature>
<feature type="binding site" evidence="1">
    <location>
        <begin position="138"/>
        <end position="145"/>
    </location>
    <ligand>
        <name>UMP</name>
        <dbReference type="ChEBI" id="CHEBI:57865"/>
    </ligand>
</feature>
<feature type="binding site" evidence="1">
    <location>
        <position position="165"/>
    </location>
    <ligand>
        <name>ATP</name>
        <dbReference type="ChEBI" id="CHEBI:30616"/>
    </ligand>
</feature>
<feature type="binding site" evidence="1">
    <location>
        <position position="171"/>
    </location>
    <ligand>
        <name>ATP</name>
        <dbReference type="ChEBI" id="CHEBI:30616"/>
    </ligand>
</feature>
<feature type="binding site" evidence="1">
    <location>
        <position position="174"/>
    </location>
    <ligand>
        <name>ATP</name>
        <dbReference type="ChEBI" id="CHEBI:30616"/>
    </ligand>
</feature>